<feature type="chain" id="PRO_0000286356" description="HMG box-containing protein 1">
    <location>
        <begin position="1"/>
        <end position="512"/>
    </location>
</feature>
<feature type="domain" description="AXH" evidence="4">
    <location>
        <begin position="201"/>
        <end position="343"/>
    </location>
</feature>
<feature type="DNA-binding region" description="HMG box" evidence="3">
    <location>
        <begin position="432"/>
        <end position="500"/>
    </location>
</feature>
<feature type="region of interest" description="Disordered" evidence="5">
    <location>
        <begin position="151"/>
        <end position="180"/>
    </location>
</feature>
<feature type="compositionally biased region" description="Basic and acidic residues" evidence="5">
    <location>
        <begin position="167"/>
        <end position="180"/>
    </location>
</feature>
<dbReference type="EMBL" id="BC105542">
    <property type="protein sequence ID" value="AAI05543.1"/>
    <property type="molecule type" value="mRNA"/>
</dbReference>
<dbReference type="RefSeq" id="XP_059741546.1">
    <property type="nucleotide sequence ID" value="XM_059885563.1"/>
</dbReference>
<dbReference type="SMR" id="Q2KJ34"/>
<dbReference type="FunCoup" id="Q2KJ34">
    <property type="interactions" value="1303"/>
</dbReference>
<dbReference type="STRING" id="9913.ENSBTAP00000007265"/>
<dbReference type="PaxDb" id="9913-ENSBTAP00000007265"/>
<dbReference type="GeneID" id="515320"/>
<dbReference type="eggNOG" id="ENOG502QR1P">
    <property type="taxonomic scope" value="Eukaryota"/>
</dbReference>
<dbReference type="InParanoid" id="Q2KJ34"/>
<dbReference type="OrthoDB" id="1919336at2759"/>
<dbReference type="Proteomes" id="UP000009136">
    <property type="component" value="Unplaced"/>
</dbReference>
<dbReference type="GO" id="GO:0005634">
    <property type="term" value="C:nucleus"/>
    <property type="evidence" value="ECO:0000318"/>
    <property type="project" value="GO_Central"/>
</dbReference>
<dbReference type="GO" id="GO:0000981">
    <property type="term" value="F:DNA-binding transcription factor activity, RNA polymerase II-specific"/>
    <property type="evidence" value="ECO:0000318"/>
    <property type="project" value="GO_Central"/>
</dbReference>
<dbReference type="GO" id="GO:0003723">
    <property type="term" value="F:RNA binding"/>
    <property type="evidence" value="ECO:0007669"/>
    <property type="project" value="InterPro"/>
</dbReference>
<dbReference type="GO" id="GO:0000978">
    <property type="term" value="F:RNA polymerase II cis-regulatory region sequence-specific DNA binding"/>
    <property type="evidence" value="ECO:0000318"/>
    <property type="project" value="GO_Central"/>
</dbReference>
<dbReference type="GO" id="GO:0006357">
    <property type="term" value="P:regulation of transcription by RNA polymerase II"/>
    <property type="evidence" value="ECO:0000318"/>
    <property type="project" value="GO_Central"/>
</dbReference>
<dbReference type="GO" id="GO:0016055">
    <property type="term" value="P:Wnt signaling pathway"/>
    <property type="evidence" value="ECO:0007669"/>
    <property type="project" value="UniProtKB-KW"/>
</dbReference>
<dbReference type="CDD" id="cd21988">
    <property type="entry name" value="HMG-box_HBP1"/>
    <property type="match status" value="1"/>
</dbReference>
<dbReference type="FunFam" id="1.10.30.10:FF:000020">
    <property type="entry name" value="HMG box-containing protein 1"/>
    <property type="match status" value="1"/>
</dbReference>
<dbReference type="Gene3D" id="1.10.30.10">
    <property type="entry name" value="High mobility group box domain"/>
    <property type="match status" value="1"/>
</dbReference>
<dbReference type="InterPro" id="IPR003652">
    <property type="entry name" value="Ataxin_AXH_dom"/>
</dbReference>
<dbReference type="InterPro" id="IPR036096">
    <property type="entry name" value="Ataxin_AXH_dom_sf"/>
</dbReference>
<dbReference type="InterPro" id="IPR039655">
    <property type="entry name" value="HBP1"/>
</dbReference>
<dbReference type="InterPro" id="IPR009071">
    <property type="entry name" value="HMG_box_dom"/>
</dbReference>
<dbReference type="InterPro" id="IPR036910">
    <property type="entry name" value="HMG_box_dom_sf"/>
</dbReference>
<dbReference type="PANTHER" id="PTHR15499">
    <property type="entry name" value="HMG BOX-CONTAINING PROTEIN 1"/>
    <property type="match status" value="1"/>
</dbReference>
<dbReference type="PANTHER" id="PTHR15499:SF3">
    <property type="entry name" value="HMG BOX-CONTAINING PROTEIN 1"/>
    <property type="match status" value="1"/>
</dbReference>
<dbReference type="Pfam" id="PF08517">
    <property type="entry name" value="AXH"/>
    <property type="match status" value="1"/>
</dbReference>
<dbReference type="Pfam" id="PF00505">
    <property type="entry name" value="HMG_box"/>
    <property type="match status" value="1"/>
</dbReference>
<dbReference type="SMART" id="SM00536">
    <property type="entry name" value="AXH"/>
    <property type="match status" value="1"/>
</dbReference>
<dbReference type="SMART" id="SM00398">
    <property type="entry name" value="HMG"/>
    <property type="match status" value="1"/>
</dbReference>
<dbReference type="SUPFAM" id="SSF102031">
    <property type="entry name" value="AXH domain"/>
    <property type="match status" value="1"/>
</dbReference>
<dbReference type="SUPFAM" id="SSF47095">
    <property type="entry name" value="HMG-box"/>
    <property type="match status" value="1"/>
</dbReference>
<dbReference type="PROSITE" id="PS51148">
    <property type="entry name" value="AXH"/>
    <property type="match status" value="1"/>
</dbReference>
<dbReference type="PROSITE" id="PS50118">
    <property type="entry name" value="HMG_BOX_2"/>
    <property type="match status" value="1"/>
</dbReference>
<keyword id="KW-0238">DNA-binding</keyword>
<keyword id="KW-0539">Nucleus</keyword>
<keyword id="KW-1185">Reference proteome</keyword>
<keyword id="KW-0678">Repressor</keyword>
<keyword id="KW-0804">Transcription</keyword>
<keyword id="KW-0805">Transcription regulation</keyword>
<keyword id="KW-0832">Ubl conjugation</keyword>
<keyword id="KW-0879">Wnt signaling pathway</keyword>
<proteinExistence type="evidence at transcript level"/>
<comment type="function">
    <text evidence="1">Transcriptional repressor that binds to the promoter region of target genes. Plays a role in the regulation of the cell cycle and of the Wnt pathway. Binds preferentially to the sequence 5'-TTCATTCATTCA-3'. Binding to the histone H1.0 promoter is enhanced by interaction with RB1. Disrupts the interaction between DNA and TCF4 (By similarity).</text>
</comment>
<comment type="subunit">
    <text evidence="1 2">Binds TCF4 (By similarity). Binds RB1. Binds the second PAH repeat of SIN3A (By similarity).</text>
</comment>
<comment type="subcellular location">
    <subcellularLocation>
        <location evidence="3">Nucleus</location>
    </subcellularLocation>
</comment>
<comment type="PTM">
    <text evidence="1">Ubiquitinated by the CTLH E3 ubiquitin-protein ligase complex, leading to subsequent proteasomal degradation.</text>
</comment>
<gene>
    <name type="primary">HBP1</name>
</gene>
<sequence>MVWEVKSNQMPDAVQKLLLVMDKRAPGVSDSLQLLQCKETLPSSPGYNSCDEHMELDDLPELQAVQSDPTPSAIYQLSSDVSHQEYPRPSWNQNTSEISENTYRENEVDWLTELANIATSPQSPLMQCSFYNRSSPVHIIATSKSLHSYARPPPVASSKGEPAFPHHWKEQTPVRHERANSESESGIFCMSSLSDDDDLGWCNSWPSTAWHCFLKGTRLCFHKGSNKEWQNVEDFARTEGCDNEEDLQMGTHKDYGSDGLKLLSHEESVSFGESVLKLTFDPGTVEDGLLTVECKLDHPFYVKNKGWSSFYPSLTVVQHGIPCCEIHIGDVCLPPGHPDAINFDDSGVFDTFKSYDFTPMDSSAVYVLSSMARQRRASLSCGGPGGQDFERSGFSKNCGSPGSSQLSSSSLYAKAVKTHSSGTVSATSPNKCKRPMNAFMLFAKKYRVEYTQMYPGKDNRAISVILGDRWKKMKNEERRMYTLEAKALAEEQKRLNPDCWKRKRTNSGSQQH</sequence>
<organism>
    <name type="scientific">Bos taurus</name>
    <name type="common">Bovine</name>
    <dbReference type="NCBI Taxonomy" id="9913"/>
    <lineage>
        <taxon>Eukaryota</taxon>
        <taxon>Metazoa</taxon>
        <taxon>Chordata</taxon>
        <taxon>Craniata</taxon>
        <taxon>Vertebrata</taxon>
        <taxon>Euteleostomi</taxon>
        <taxon>Mammalia</taxon>
        <taxon>Eutheria</taxon>
        <taxon>Laurasiatheria</taxon>
        <taxon>Artiodactyla</taxon>
        <taxon>Ruminantia</taxon>
        <taxon>Pecora</taxon>
        <taxon>Bovidae</taxon>
        <taxon>Bovinae</taxon>
        <taxon>Bos</taxon>
    </lineage>
</organism>
<name>HBP1_BOVIN</name>
<reference key="1">
    <citation type="submission" date="2005-09" db="EMBL/GenBank/DDBJ databases">
        <authorList>
            <consortium name="NIH - Mammalian Gene Collection (MGC) project"/>
        </authorList>
    </citation>
    <scope>NUCLEOTIDE SEQUENCE [LARGE SCALE MRNA]</scope>
    <source>
        <strain>Hereford</strain>
        <tissue>Ascending colon</tissue>
    </source>
</reference>
<accession>Q2KJ34</accession>
<evidence type="ECO:0000250" key="1">
    <source>
        <dbReference type="UniProtKB" id="O60381"/>
    </source>
</evidence>
<evidence type="ECO:0000250" key="2">
    <source>
        <dbReference type="UniProtKB" id="Q8R316"/>
    </source>
</evidence>
<evidence type="ECO:0000255" key="3">
    <source>
        <dbReference type="PROSITE-ProRule" id="PRU00267"/>
    </source>
</evidence>
<evidence type="ECO:0000255" key="4">
    <source>
        <dbReference type="PROSITE-ProRule" id="PRU00496"/>
    </source>
</evidence>
<evidence type="ECO:0000256" key="5">
    <source>
        <dbReference type="SAM" id="MobiDB-lite"/>
    </source>
</evidence>
<protein>
    <recommendedName>
        <fullName>HMG box-containing protein 1</fullName>
    </recommendedName>
    <alternativeName>
        <fullName>HMG box transcription factor 1</fullName>
    </alternativeName>
    <alternativeName>
        <fullName>High mobility group box transcription factor 1</fullName>
    </alternativeName>
</protein>